<comment type="function">
    <text evidence="1">An aminoacyl-tRNA editing enzyme that deacylates mischarged D-aminoacyl-tRNAs. Also deacylates mischarged glycyl-tRNA(Ala), protecting cells against glycine mischarging by AlaRS. Acts via tRNA-based rather than protein-based catalysis; rejects L-amino acids rather than detecting D-amino acids in the active site. By recycling D-aminoacyl-tRNA to D-amino acids and free tRNA molecules, this enzyme counteracts the toxicity associated with the formation of D-aminoacyl-tRNA entities in vivo and helps enforce protein L-homochirality.</text>
</comment>
<comment type="catalytic activity">
    <reaction evidence="1">
        <text>glycyl-tRNA(Ala) + H2O = tRNA(Ala) + glycine + H(+)</text>
        <dbReference type="Rhea" id="RHEA:53744"/>
        <dbReference type="Rhea" id="RHEA-COMP:9657"/>
        <dbReference type="Rhea" id="RHEA-COMP:13640"/>
        <dbReference type="ChEBI" id="CHEBI:15377"/>
        <dbReference type="ChEBI" id="CHEBI:15378"/>
        <dbReference type="ChEBI" id="CHEBI:57305"/>
        <dbReference type="ChEBI" id="CHEBI:78442"/>
        <dbReference type="ChEBI" id="CHEBI:78522"/>
        <dbReference type="EC" id="3.1.1.96"/>
    </reaction>
</comment>
<comment type="catalytic activity">
    <reaction evidence="1">
        <text>a D-aminoacyl-tRNA + H2O = a tRNA + a D-alpha-amino acid + H(+)</text>
        <dbReference type="Rhea" id="RHEA:13953"/>
        <dbReference type="Rhea" id="RHEA-COMP:10123"/>
        <dbReference type="Rhea" id="RHEA-COMP:10124"/>
        <dbReference type="ChEBI" id="CHEBI:15377"/>
        <dbReference type="ChEBI" id="CHEBI:15378"/>
        <dbReference type="ChEBI" id="CHEBI:59871"/>
        <dbReference type="ChEBI" id="CHEBI:78442"/>
        <dbReference type="ChEBI" id="CHEBI:79333"/>
        <dbReference type="EC" id="3.1.1.96"/>
    </reaction>
</comment>
<comment type="subunit">
    <text evidence="1">Homodimer.</text>
</comment>
<comment type="subcellular location">
    <subcellularLocation>
        <location evidence="1">Cytoplasm</location>
    </subcellularLocation>
</comment>
<comment type="domain">
    <text evidence="1">A Gly-cisPro motif from one monomer fits into the active site of the other monomer to allow specific chiral rejection of L-amino acids.</text>
</comment>
<comment type="similarity">
    <text evidence="1">Belongs to the DTD family.</text>
</comment>
<sequence>MIALIQRVTRASVTVEDEVTGKIGPGLLVLLGVEKEDDEQKANRLCERVLGYRIFSDVDGKMNLNVQQAGGSVLVVSQFTLAADTERGMRPSFSGGAAPDRAQALYEYFVERCRQQAINTQTGRFAADMQVELVNDGPVTFWLQV</sequence>
<accession>P58532</accession>
<proteinExistence type="inferred from homology"/>
<feature type="chain" id="PRO_0000164580" description="D-aminoacyl-tRNA deacylase">
    <location>
        <begin position="1"/>
        <end position="145"/>
    </location>
</feature>
<feature type="short sequence motif" description="Gly-cisPro motif, important for rejection of L-amino acids" evidence="1">
    <location>
        <begin position="137"/>
        <end position="138"/>
    </location>
</feature>
<evidence type="ECO:0000255" key="1">
    <source>
        <dbReference type="HAMAP-Rule" id="MF_00518"/>
    </source>
</evidence>
<organism>
    <name type="scientific">Salmonella typhi</name>
    <dbReference type="NCBI Taxonomy" id="90370"/>
    <lineage>
        <taxon>Bacteria</taxon>
        <taxon>Pseudomonadati</taxon>
        <taxon>Pseudomonadota</taxon>
        <taxon>Gammaproteobacteria</taxon>
        <taxon>Enterobacterales</taxon>
        <taxon>Enterobacteriaceae</taxon>
        <taxon>Salmonella</taxon>
    </lineage>
</organism>
<name>DTD_SALTI</name>
<gene>
    <name evidence="1" type="primary">dtd</name>
    <name type="ordered locus">STY3850</name>
    <name type="ordered locus">t3593</name>
</gene>
<keyword id="KW-0963">Cytoplasm</keyword>
<keyword id="KW-0378">Hydrolase</keyword>
<keyword id="KW-0694">RNA-binding</keyword>
<keyword id="KW-0820">tRNA-binding</keyword>
<protein>
    <recommendedName>
        <fullName evidence="1">D-aminoacyl-tRNA deacylase</fullName>
        <shortName evidence="1">DTD</shortName>
        <ecNumber evidence="1">3.1.1.96</ecNumber>
    </recommendedName>
    <alternativeName>
        <fullName evidence="1">Gly-tRNA(Ala) deacylase</fullName>
    </alternativeName>
</protein>
<dbReference type="EC" id="3.1.1.96" evidence="1"/>
<dbReference type="EMBL" id="AL513382">
    <property type="protein sequence ID" value="CAD09598.1"/>
    <property type="molecule type" value="Genomic_DNA"/>
</dbReference>
<dbReference type="EMBL" id="AE014613">
    <property type="protein sequence ID" value="AAO71096.1"/>
    <property type="molecule type" value="Genomic_DNA"/>
</dbReference>
<dbReference type="RefSeq" id="NP_458023.1">
    <property type="nucleotide sequence ID" value="NC_003198.1"/>
</dbReference>
<dbReference type="RefSeq" id="WP_000560975.1">
    <property type="nucleotide sequence ID" value="NZ_WSUR01000010.1"/>
</dbReference>
<dbReference type="SMR" id="P58532"/>
<dbReference type="STRING" id="220341.gene:17587709"/>
<dbReference type="KEGG" id="stt:t3593"/>
<dbReference type="KEGG" id="sty:STY3850"/>
<dbReference type="PATRIC" id="fig|220341.7.peg.3930"/>
<dbReference type="eggNOG" id="COG1490">
    <property type="taxonomic scope" value="Bacteria"/>
</dbReference>
<dbReference type="HOGENOM" id="CLU_076901_1_1_6"/>
<dbReference type="OMA" id="VFGADMK"/>
<dbReference type="OrthoDB" id="9801395at2"/>
<dbReference type="Proteomes" id="UP000000541">
    <property type="component" value="Chromosome"/>
</dbReference>
<dbReference type="Proteomes" id="UP000002670">
    <property type="component" value="Chromosome"/>
</dbReference>
<dbReference type="GO" id="GO:0005737">
    <property type="term" value="C:cytoplasm"/>
    <property type="evidence" value="ECO:0007669"/>
    <property type="project" value="UniProtKB-SubCell"/>
</dbReference>
<dbReference type="GO" id="GO:0051500">
    <property type="term" value="F:D-tyrosyl-tRNA(Tyr) deacylase activity"/>
    <property type="evidence" value="ECO:0007669"/>
    <property type="project" value="TreeGrafter"/>
</dbReference>
<dbReference type="GO" id="GO:0106026">
    <property type="term" value="F:Gly-tRNA(Ala) deacylase activity"/>
    <property type="evidence" value="ECO:0007669"/>
    <property type="project" value="UniProtKB-UniRule"/>
</dbReference>
<dbReference type="GO" id="GO:0043908">
    <property type="term" value="F:Ser(Gly)-tRNA(Ala) hydrolase activity"/>
    <property type="evidence" value="ECO:0007669"/>
    <property type="project" value="UniProtKB-UniRule"/>
</dbReference>
<dbReference type="GO" id="GO:0000049">
    <property type="term" value="F:tRNA binding"/>
    <property type="evidence" value="ECO:0007669"/>
    <property type="project" value="UniProtKB-UniRule"/>
</dbReference>
<dbReference type="GO" id="GO:0019478">
    <property type="term" value="P:D-amino acid catabolic process"/>
    <property type="evidence" value="ECO:0007669"/>
    <property type="project" value="UniProtKB-UniRule"/>
</dbReference>
<dbReference type="CDD" id="cd00563">
    <property type="entry name" value="Dtyr_deacylase"/>
    <property type="match status" value="1"/>
</dbReference>
<dbReference type="FunFam" id="3.50.80.10:FF:000001">
    <property type="entry name" value="D-aminoacyl-tRNA deacylase"/>
    <property type="match status" value="1"/>
</dbReference>
<dbReference type="Gene3D" id="3.50.80.10">
    <property type="entry name" value="D-tyrosyl-tRNA(Tyr) deacylase"/>
    <property type="match status" value="1"/>
</dbReference>
<dbReference type="HAMAP" id="MF_00518">
    <property type="entry name" value="Deacylase_Dtd"/>
    <property type="match status" value="1"/>
</dbReference>
<dbReference type="InterPro" id="IPR003732">
    <property type="entry name" value="Daa-tRNA_deacyls_DTD"/>
</dbReference>
<dbReference type="InterPro" id="IPR023509">
    <property type="entry name" value="DTD-like_sf"/>
</dbReference>
<dbReference type="NCBIfam" id="TIGR00256">
    <property type="entry name" value="D-aminoacyl-tRNA deacylase"/>
    <property type="match status" value="1"/>
</dbReference>
<dbReference type="PANTHER" id="PTHR10472:SF5">
    <property type="entry name" value="D-AMINOACYL-TRNA DEACYLASE 1"/>
    <property type="match status" value="1"/>
</dbReference>
<dbReference type="PANTHER" id="PTHR10472">
    <property type="entry name" value="D-TYROSYL-TRNA TYR DEACYLASE"/>
    <property type="match status" value="1"/>
</dbReference>
<dbReference type="Pfam" id="PF02580">
    <property type="entry name" value="Tyr_Deacylase"/>
    <property type="match status" value="1"/>
</dbReference>
<dbReference type="SUPFAM" id="SSF69500">
    <property type="entry name" value="DTD-like"/>
    <property type="match status" value="1"/>
</dbReference>
<reference key="1">
    <citation type="journal article" date="2001" name="Nature">
        <title>Complete genome sequence of a multiple drug resistant Salmonella enterica serovar Typhi CT18.</title>
        <authorList>
            <person name="Parkhill J."/>
            <person name="Dougan G."/>
            <person name="James K.D."/>
            <person name="Thomson N.R."/>
            <person name="Pickard D."/>
            <person name="Wain J."/>
            <person name="Churcher C.M."/>
            <person name="Mungall K.L."/>
            <person name="Bentley S.D."/>
            <person name="Holden M.T.G."/>
            <person name="Sebaihia M."/>
            <person name="Baker S."/>
            <person name="Basham D."/>
            <person name="Brooks K."/>
            <person name="Chillingworth T."/>
            <person name="Connerton P."/>
            <person name="Cronin A."/>
            <person name="Davis P."/>
            <person name="Davies R.M."/>
            <person name="Dowd L."/>
            <person name="White N."/>
            <person name="Farrar J."/>
            <person name="Feltwell T."/>
            <person name="Hamlin N."/>
            <person name="Haque A."/>
            <person name="Hien T.T."/>
            <person name="Holroyd S."/>
            <person name="Jagels K."/>
            <person name="Krogh A."/>
            <person name="Larsen T.S."/>
            <person name="Leather S."/>
            <person name="Moule S."/>
            <person name="O'Gaora P."/>
            <person name="Parry C."/>
            <person name="Quail M.A."/>
            <person name="Rutherford K.M."/>
            <person name="Simmonds M."/>
            <person name="Skelton J."/>
            <person name="Stevens K."/>
            <person name="Whitehead S."/>
            <person name="Barrell B.G."/>
        </authorList>
    </citation>
    <scope>NUCLEOTIDE SEQUENCE [LARGE SCALE GENOMIC DNA]</scope>
    <source>
        <strain>CT18</strain>
    </source>
</reference>
<reference key="2">
    <citation type="journal article" date="2003" name="J. Bacteriol.">
        <title>Comparative genomics of Salmonella enterica serovar Typhi strains Ty2 and CT18.</title>
        <authorList>
            <person name="Deng W."/>
            <person name="Liou S.-R."/>
            <person name="Plunkett G. III"/>
            <person name="Mayhew G.F."/>
            <person name="Rose D.J."/>
            <person name="Burland V."/>
            <person name="Kodoyianni V."/>
            <person name="Schwartz D.C."/>
            <person name="Blattner F.R."/>
        </authorList>
    </citation>
    <scope>NUCLEOTIDE SEQUENCE [LARGE SCALE GENOMIC DNA]</scope>
    <source>
        <strain>ATCC 700931 / Ty2</strain>
    </source>
</reference>